<name>LOLD_RHIJ3</name>
<evidence type="ECO:0000255" key="1">
    <source>
        <dbReference type="HAMAP-Rule" id="MF_01708"/>
    </source>
</evidence>
<sequence>MKRNVVLQLTGVERHYGQGGTLLSILKGADFSISKGEIVALVAPSGTGKSTLLHVAGLLEHPDGGEVNINGHACDGLSDEKRTAIRRSQIGFVYQFHHLLPEFSALENIMMPQLIAGLSWKEAGERAGQLLDYMRIGHRGSHRPGELSGGEQQRVAIARAVANAPTLLLADEPTGNLDPETASYVFDALEALVRQSGLAALIATHNHELARRMDRRVTISDGKIVDF</sequence>
<gene>
    <name evidence="1" type="primary">lolD</name>
    <name type="ordered locus">RL1721</name>
</gene>
<organism>
    <name type="scientific">Rhizobium johnstonii (strain DSM 114642 / LMG 32736 / 3841)</name>
    <name type="common">Rhizobium leguminosarum bv. viciae</name>
    <dbReference type="NCBI Taxonomy" id="216596"/>
    <lineage>
        <taxon>Bacteria</taxon>
        <taxon>Pseudomonadati</taxon>
        <taxon>Pseudomonadota</taxon>
        <taxon>Alphaproteobacteria</taxon>
        <taxon>Hyphomicrobiales</taxon>
        <taxon>Rhizobiaceae</taxon>
        <taxon>Rhizobium/Agrobacterium group</taxon>
        <taxon>Rhizobium</taxon>
        <taxon>Rhizobium johnstonii</taxon>
    </lineage>
</organism>
<accession>Q1MIJ4</accession>
<comment type="function">
    <text evidence="1">Part of the ABC transporter complex LolCDE involved in the translocation of mature outer membrane-directed lipoproteins, from the inner membrane to the periplasmic chaperone, LolA. Responsible for the formation of the LolA-lipoprotein complex in an ATP-dependent manner.</text>
</comment>
<comment type="subunit">
    <text evidence="1">The complex is composed of two ATP-binding proteins (LolD) and two transmembrane proteins (LolC and LolE).</text>
</comment>
<comment type="subcellular location">
    <subcellularLocation>
        <location evidence="1">Cell inner membrane</location>
        <topology evidence="1">Peripheral membrane protein</topology>
    </subcellularLocation>
</comment>
<comment type="similarity">
    <text evidence="1">Belongs to the ABC transporter superfamily. Lipoprotein translocase (TC 3.A.1.125) family.</text>
</comment>
<reference key="1">
    <citation type="journal article" date="2006" name="Genome Biol.">
        <title>The genome of Rhizobium leguminosarum has recognizable core and accessory components.</title>
        <authorList>
            <person name="Young J.P.W."/>
            <person name="Crossman L.C."/>
            <person name="Johnston A.W.B."/>
            <person name="Thomson N.R."/>
            <person name="Ghazoui Z.F."/>
            <person name="Hull K.H."/>
            <person name="Wexler M."/>
            <person name="Curson A.R.J."/>
            <person name="Todd J.D."/>
            <person name="Poole P.S."/>
            <person name="Mauchline T.H."/>
            <person name="East A.K."/>
            <person name="Quail M.A."/>
            <person name="Churcher C."/>
            <person name="Arrowsmith C."/>
            <person name="Cherevach I."/>
            <person name="Chillingworth T."/>
            <person name="Clarke K."/>
            <person name="Cronin A."/>
            <person name="Davis P."/>
            <person name="Fraser A."/>
            <person name="Hance Z."/>
            <person name="Hauser H."/>
            <person name="Jagels K."/>
            <person name="Moule S."/>
            <person name="Mungall K."/>
            <person name="Norbertczak H."/>
            <person name="Rabbinowitsch E."/>
            <person name="Sanders M."/>
            <person name="Simmonds M."/>
            <person name="Whitehead S."/>
            <person name="Parkhill J."/>
        </authorList>
    </citation>
    <scope>NUCLEOTIDE SEQUENCE [LARGE SCALE GENOMIC DNA]</scope>
    <source>
        <strain>DSM 114642 / LMG 32736 / 3841</strain>
    </source>
</reference>
<feature type="chain" id="PRO_0000272133" description="Lipoprotein-releasing system ATP-binding protein LolD">
    <location>
        <begin position="1"/>
        <end position="227"/>
    </location>
</feature>
<feature type="domain" description="ABC transporter" evidence="1">
    <location>
        <begin position="7"/>
        <end position="227"/>
    </location>
</feature>
<feature type="binding site" evidence="1">
    <location>
        <begin position="43"/>
        <end position="50"/>
    </location>
    <ligand>
        <name>ATP</name>
        <dbReference type="ChEBI" id="CHEBI:30616"/>
    </ligand>
</feature>
<keyword id="KW-0067">ATP-binding</keyword>
<keyword id="KW-0997">Cell inner membrane</keyword>
<keyword id="KW-1003">Cell membrane</keyword>
<keyword id="KW-0472">Membrane</keyword>
<keyword id="KW-0547">Nucleotide-binding</keyword>
<keyword id="KW-1278">Translocase</keyword>
<keyword id="KW-0813">Transport</keyword>
<protein>
    <recommendedName>
        <fullName evidence="1">Lipoprotein-releasing system ATP-binding protein LolD</fullName>
        <ecNumber evidence="1">7.6.2.-</ecNumber>
    </recommendedName>
</protein>
<dbReference type="EC" id="7.6.2.-" evidence="1"/>
<dbReference type="EMBL" id="AM236080">
    <property type="protein sequence ID" value="CAK07216.1"/>
    <property type="molecule type" value="Genomic_DNA"/>
</dbReference>
<dbReference type="RefSeq" id="WP_011651383.1">
    <property type="nucleotide sequence ID" value="NC_008380.1"/>
</dbReference>
<dbReference type="SMR" id="Q1MIJ4"/>
<dbReference type="EnsemblBacteria" id="CAK07216">
    <property type="protein sequence ID" value="CAK07216"/>
    <property type="gene ID" value="RL1721"/>
</dbReference>
<dbReference type="KEGG" id="rle:RL1721"/>
<dbReference type="eggNOG" id="COG1136">
    <property type="taxonomic scope" value="Bacteria"/>
</dbReference>
<dbReference type="HOGENOM" id="CLU_000604_1_22_5"/>
<dbReference type="Proteomes" id="UP000006575">
    <property type="component" value="Chromosome"/>
</dbReference>
<dbReference type="GO" id="GO:0005886">
    <property type="term" value="C:plasma membrane"/>
    <property type="evidence" value="ECO:0007669"/>
    <property type="project" value="UniProtKB-SubCell"/>
</dbReference>
<dbReference type="GO" id="GO:0005524">
    <property type="term" value="F:ATP binding"/>
    <property type="evidence" value="ECO:0007669"/>
    <property type="project" value="UniProtKB-KW"/>
</dbReference>
<dbReference type="GO" id="GO:0016887">
    <property type="term" value="F:ATP hydrolysis activity"/>
    <property type="evidence" value="ECO:0007669"/>
    <property type="project" value="InterPro"/>
</dbReference>
<dbReference type="GO" id="GO:0022857">
    <property type="term" value="F:transmembrane transporter activity"/>
    <property type="evidence" value="ECO:0007669"/>
    <property type="project" value="TreeGrafter"/>
</dbReference>
<dbReference type="GO" id="GO:0044874">
    <property type="term" value="P:lipoprotein localization to outer membrane"/>
    <property type="evidence" value="ECO:0007669"/>
    <property type="project" value="TreeGrafter"/>
</dbReference>
<dbReference type="GO" id="GO:0089705">
    <property type="term" value="P:protein localization to outer membrane"/>
    <property type="evidence" value="ECO:0007669"/>
    <property type="project" value="TreeGrafter"/>
</dbReference>
<dbReference type="CDD" id="cd03255">
    <property type="entry name" value="ABC_MJ0796_LolCDE_FtsE"/>
    <property type="match status" value="1"/>
</dbReference>
<dbReference type="FunFam" id="3.40.50.300:FF:000032">
    <property type="entry name" value="Export ABC transporter ATP-binding protein"/>
    <property type="match status" value="1"/>
</dbReference>
<dbReference type="Gene3D" id="3.40.50.300">
    <property type="entry name" value="P-loop containing nucleotide triphosphate hydrolases"/>
    <property type="match status" value="1"/>
</dbReference>
<dbReference type="InterPro" id="IPR003593">
    <property type="entry name" value="AAA+_ATPase"/>
</dbReference>
<dbReference type="InterPro" id="IPR003439">
    <property type="entry name" value="ABC_transporter-like_ATP-bd"/>
</dbReference>
<dbReference type="InterPro" id="IPR017871">
    <property type="entry name" value="ABC_transporter-like_CS"/>
</dbReference>
<dbReference type="InterPro" id="IPR015854">
    <property type="entry name" value="ABC_transpr_LolD-like"/>
</dbReference>
<dbReference type="InterPro" id="IPR017911">
    <property type="entry name" value="MacB-like_ATP-bd"/>
</dbReference>
<dbReference type="InterPro" id="IPR027417">
    <property type="entry name" value="P-loop_NTPase"/>
</dbReference>
<dbReference type="PANTHER" id="PTHR24220">
    <property type="entry name" value="IMPORT ATP-BINDING PROTEIN"/>
    <property type="match status" value="1"/>
</dbReference>
<dbReference type="PANTHER" id="PTHR24220:SF689">
    <property type="entry name" value="LIPOPROTEIN-RELEASING SYSTEM ATP-BINDING PROTEIN LOLD"/>
    <property type="match status" value="1"/>
</dbReference>
<dbReference type="Pfam" id="PF00005">
    <property type="entry name" value="ABC_tran"/>
    <property type="match status" value="1"/>
</dbReference>
<dbReference type="SMART" id="SM00382">
    <property type="entry name" value="AAA"/>
    <property type="match status" value="1"/>
</dbReference>
<dbReference type="SUPFAM" id="SSF52540">
    <property type="entry name" value="P-loop containing nucleoside triphosphate hydrolases"/>
    <property type="match status" value="1"/>
</dbReference>
<dbReference type="PROSITE" id="PS00211">
    <property type="entry name" value="ABC_TRANSPORTER_1"/>
    <property type="match status" value="1"/>
</dbReference>
<dbReference type="PROSITE" id="PS50893">
    <property type="entry name" value="ABC_TRANSPORTER_2"/>
    <property type="match status" value="1"/>
</dbReference>
<dbReference type="PROSITE" id="PS51244">
    <property type="entry name" value="LOLD"/>
    <property type="match status" value="1"/>
</dbReference>
<proteinExistence type="inferred from homology"/>